<accession>A5VJE8</accession>
<organism>
    <name type="scientific">Limosilactobacillus reuteri (strain DSM 20016)</name>
    <name type="common">Lactobacillus reuteri</name>
    <dbReference type="NCBI Taxonomy" id="557436"/>
    <lineage>
        <taxon>Bacteria</taxon>
        <taxon>Bacillati</taxon>
        <taxon>Bacillota</taxon>
        <taxon>Bacilli</taxon>
        <taxon>Lactobacillales</taxon>
        <taxon>Lactobacillaceae</taxon>
        <taxon>Limosilactobacillus</taxon>
    </lineage>
</organism>
<protein>
    <recommendedName>
        <fullName evidence="1">Chaperone protein DnaJ</fullName>
    </recommendedName>
</protein>
<name>DNAJ_LIMRD</name>
<feature type="chain" id="PRO_1000137700" description="Chaperone protein DnaJ">
    <location>
        <begin position="1"/>
        <end position="383"/>
    </location>
</feature>
<feature type="domain" description="J" evidence="1">
    <location>
        <begin position="5"/>
        <end position="69"/>
    </location>
</feature>
<feature type="repeat" description="CXXCXGXG motif">
    <location>
        <begin position="151"/>
        <end position="158"/>
    </location>
</feature>
<feature type="repeat" description="CXXCXGXG motif">
    <location>
        <begin position="168"/>
        <end position="175"/>
    </location>
</feature>
<feature type="repeat" description="CXXCXGXG motif">
    <location>
        <begin position="194"/>
        <end position="201"/>
    </location>
</feature>
<feature type="repeat" description="CXXCXGXG motif">
    <location>
        <begin position="210"/>
        <end position="217"/>
    </location>
</feature>
<feature type="zinc finger region" description="CR-type" evidence="1">
    <location>
        <begin position="138"/>
        <end position="222"/>
    </location>
</feature>
<feature type="binding site" evidence="1">
    <location>
        <position position="151"/>
    </location>
    <ligand>
        <name>Zn(2+)</name>
        <dbReference type="ChEBI" id="CHEBI:29105"/>
        <label>1</label>
    </ligand>
</feature>
<feature type="binding site" evidence="1">
    <location>
        <position position="154"/>
    </location>
    <ligand>
        <name>Zn(2+)</name>
        <dbReference type="ChEBI" id="CHEBI:29105"/>
        <label>1</label>
    </ligand>
</feature>
<feature type="binding site" evidence="1">
    <location>
        <position position="168"/>
    </location>
    <ligand>
        <name>Zn(2+)</name>
        <dbReference type="ChEBI" id="CHEBI:29105"/>
        <label>2</label>
    </ligand>
</feature>
<feature type="binding site" evidence="1">
    <location>
        <position position="171"/>
    </location>
    <ligand>
        <name>Zn(2+)</name>
        <dbReference type="ChEBI" id="CHEBI:29105"/>
        <label>2</label>
    </ligand>
</feature>
<feature type="binding site" evidence="1">
    <location>
        <position position="194"/>
    </location>
    <ligand>
        <name>Zn(2+)</name>
        <dbReference type="ChEBI" id="CHEBI:29105"/>
        <label>2</label>
    </ligand>
</feature>
<feature type="binding site" evidence="1">
    <location>
        <position position="197"/>
    </location>
    <ligand>
        <name>Zn(2+)</name>
        <dbReference type="ChEBI" id="CHEBI:29105"/>
        <label>2</label>
    </ligand>
</feature>
<feature type="binding site" evidence="1">
    <location>
        <position position="210"/>
    </location>
    <ligand>
        <name>Zn(2+)</name>
        <dbReference type="ChEBI" id="CHEBI:29105"/>
        <label>1</label>
    </ligand>
</feature>
<feature type="binding site" evidence="1">
    <location>
        <position position="213"/>
    </location>
    <ligand>
        <name>Zn(2+)</name>
        <dbReference type="ChEBI" id="CHEBI:29105"/>
        <label>1</label>
    </ligand>
</feature>
<comment type="function">
    <text evidence="1">Participates actively in the response to hyperosmotic and heat shock by preventing the aggregation of stress-denatured proteins and by disaggregating proteins, also in an autonomous, DnaK-independent fashion. Unfolded proteins bind initially to DnaJ; upon interaction with the DnaJ-bound protein, DnaK hydrolyzes its bound ATP, resulting in the formation of a stable complex. GrpE releases ADP from DnaK; ATP binding to DnaK triggers the release of the substrate protein, thus completing the reaction cycle. Several rounds of ATP-dependent interactions between DnaJ, DnaK and GrpE are required for fully efficient folding. Also involved, together with DnaK and GrpE, in the DNA replication of plasmids through activation of initiation proteins.</text>
</comment>
<comment type="cofactor">
    <cofactor evidence="1">
        <name>Zn(2+)</name>
        <dbReference type="ChEBI" id="CHEBI:29105"/>
    </cofactor>
    <text evidence="1">Binds 2 Zn(2+) ions per monomer.</text>
</comment>
<comment type="subunit">
    <text evidence="1">Homodimer.</text>
</comment>
<comment type="subcellular location">
    <subcellularLocation>
        <location evidence="1">Cytoplasm</location>
    </subcellularLocation>
</comment>
<comment type="domain">
    <text evidence="1">The J domain is necessary and sufficient to stimulate DnaK ATPase activity. Zinc center 1 plays an important role in the autonomous, DnaK-independent chaperone activity of DnaJ. Zinc center 2 is essential for interaction with DnaK and for DnaJ activity.</text>
</comment>
<comment type="similarity">
    <text evidence="1">Belongs to the DnaJ family.</text>
</comment>
<gene>
    <name evidence="1" type="primary">dnaJ</name>
    <name type="ordered locus">Lreu_0707</name>
</gene>
<reference key="1">
    <citation type="journal article" date="2011" name="PLoS Genet.">
        <title>The evolution of host specialization in the vertebrate gut symbiont Lactobacillus reuteri.</title>
        <authorList>
            <person name="Frese S.A."/>
            <person name="Benson A.K."/>
            <person name="Tannock G.W."/>
            <person name="Loach D.M."/>
            <person name="Kim J."/>
            <person name="Zhang M."/>
            <person name="Oh P.L."/>
            <person name="Heng N.C."/>
            <person name="Patil P.B."/>
            <person name="Juge N."/>
            <person name="Mackenzie D.A."/>
            <person name="Pearson B.M."/>
            <person name="Lapidus A."/>
            <person name="Dalin E."/>
            <person name="Tice H."/>
            <person name="Goltsman E."/>
            <person name="Land M."/>
            <person name="Hauser L."/>
            <person name="Ivanova N."/>
            <person name="Kyrpides N.C."/>
            <person name="Walter J."/>
        </authorList>
    </citation>
    <scope>NUCLEOTIDE SEQUENCE [LARGE SCALE GENOMIC DNA]</scope>
    <source>
        <strain>DSM 20016</strain>
    </source>
</reference>
<evidence type="ECO:0000255" key="1">
    <source>
        <dbReference type="HAMAP-Rule" id="MF_01152"/>
    </source>
</evidence>
<keyword id="KW-0143">Chaperone</keyword>
<keyword id="KW-0963">Cytoplasm</keyword>
<keyword id="KW-0235">DNA replication</keyword>
<keyword id="KW-0479">Metal-binding</keyword>
<keyword id="KW-1185">Reference proteome</keyword>
<keyword id="KW-0677">Repeat</keyword>
<keyword id="KW-0346">Stress response</keyword>
<keyword id="KW-0862">Zinc</keyword>
<keyword id="KW-0863">Zinc-finger</keyword>
<sequence length="383" mass="41630">MAEQDYYDILGVSKDASEKDIKRAYRRLAAKYHPDVNHEPGAEEKFKKINEAYETLSDSQKRAQYDQFGSAGPQGAGGQGFGGFGGGQAYSNFGGGFDDIFSQFFGGGGRTRRDPTAPRQGRDLQYAMTLDFMDAVFGKTTTIKYDRDAECKTCHGTGAKPGKSPITCPRCHGAGVITSVRQTPLGNMQTQTTCPECNGTGKIIKPEDRCDTCHGAGHVHERHELEVKVPAGVDDGQQMRLQHQGDAGENGGPAGDLYIVFRVTPSREFRRDGSTIYVDRDISFAQAALGDEVKVKTVHGDVNLKIPAGTQSETNFRLRGKGVPHLNGNGNGDEHVTVHVKTPKSLNKRQREAMLAFAAASGEDVKGVKKTVLDKLRDAFEDK</sequence>
<dbReference type="EMBL" id="CP000705">
    <property type="protein sequence ID" value="ABQ82972.1"/>
    <property type="molecule type" value="Genomic_DNA"/>
</dbReference>
<dbReference type="RefSeq" id="WP_003665811.1">
    <property type="nucleotide sequence ID" value="NZ_AZDD01000017.1"/>
</dbReference>
<dbReference type="SMR" id="A5VJE8"/>
<dbReference type="STRING" id="557436.Lreu_0707"/>
<dbReference type="GeneID" id="77190746"/>
<dbReference type="KEGG" id="lre:Lreu_0707"/>
<dbReference type="PATRIC" id="fig|557436.17.peg.548"/>
<dbReference type="eggNOG" id="COG0484">
    <property type="taxonomic scope" value="Bacteria"/>
</dbReference>
<dbReference type="HOGENOM" id="CLU_017633_0_7_9"/>
<dbReference type="OMA" id="MATDYYA"/>
<dbReference type="Proteomes" id="UP000001991">
    <property type="component" value="Chromosome"/>
</dbReference>
<dbReference type="GO" id="GO:0005737">
    <property type="term" value="C:cytoplasm"/>
    <property type="evidence" value="ECO:0007669"/>
    <property type="project" value="UniProtKB-SubCell"/>
</dbReference>
<dbReference type="GO" id="GO:0005524">
    <property type="term" value="F:ATP binding"/>
    <property type="evidence" value="ECO:0007669"/>
    <property type="project" value="InterPro"/>
</dbReference>
<dbReference type="GO" id="GO:0031072">
    <property type="term" value="F:heat shock protein binding"/>
    <property type="evidence" value="ECO:0007669"/>
    <property type="project" value="InterPro"/>
</dbReference>
<dbReference type="GO" id="GO:0051082">
    <property type="term" value="F:unfolded protein binding"/>
    <property type="evidence" value="ECO:0007669"/>
    <property type="project" value="UniProtKB-UniRule"/>
</dbReference>
<dbReference type="GO" id="GO:0008270">
    <property type="term" value="F:zinc ion binding"/>
    <property type="evidence" value="ECO:0007669"/>
    <property type="project" value="UniProtKB-UniRule"/>
</dbReference>
<dbReference type="GO" id="GO:0051085">
    <property type="term" value="P:chaperone cofactor-dependent protein refolding"/>
    <property type="evidence" value="ECO:0007669"/>
    <property type="project" value="TreeGrafter"/>
</dbReference>
<dbReference type="GO" id="GO:0006260">
    <property type="term" value="P:DNA replication"/>
    <property type="evidence" value="ECO:0007669"/>
    <property type="project" value="UniProtKB-KW"/>
</dbReference>
<dbReference type="GO" id="GO:0042026">
    <property type="term" value="P:protein refolding"/>
    <property type="evidence" value="ECO:0007669"/>
    <property type="project" value="TreeGrafter"/>
</dbReference>
<dbReference type="GO" id="GO:0009408">
    <property type="term" value="P:response to heat"/>
    <property type="evidence" value="ECO:0007669"/>
    <property type="project" value="InterPro"/>
</dbReference>
<dbReference type="CDD" id="cd06257">
    <property type="entry name" value="DnaJ"/>
    <property type="match status" value="1"/>
</dbReference>
<dbReference type="CDD" id="cd10747">
    <property type="entry name" value="DnaJ_C"/>
    <property type="match status" value="1"/>
</dbReference>
<dbReference type="CDD" id="cd10719">
    <property type="entry name" value="DnaJ_zf"/>
    <property type="match status" value="1"/>
</dbReference>
<dbReference type="FunFam" id="2.60.260.20:FF:000005">
    <property type="entry name" value="Chaperone protein dnaJ 1, mitochondrial"/>
    <property type="match status" value="1"/>
</dbReference>
<dbReference type="FunFam" id="1.10.287.110:FF:000031">
    <property type="entry name" value="Molecular chaperone DnaJ"/>
    <property type="match status" value="1"/>
</dbReference>
<dbReference type="FunFam" id="2.10.230.10:FF:000002">
    <property type="entry name" value="Molecular chaperone DnaJ"/>
    <property type="match status" value="1"/>
</dbReference>
<dbReference type="Gene3D" id="1.10.287.110">
    <property type="entry name" value="DnaJ domain"/>
    <property type="match status" value="1"/>
</dbReference>
<dbReference type="Gene3D" id="2.10.230.10">
    <property type="entry name" value="Heat shock protein DnaJ, cysteine-rich domain"/>
    <property type="match status" value="1"/>
</dbReference>
<dbReference type="Gene3D" id="2.60.260.20">
    <property type="entry name" value="Urease metallochaperone UreE, N-terminal domain"/>
    <property type="match status" value="2"/>
</dbReference>
<dbReference type="HAMAP" id="MF_01152">
    <property type="entry name" value="DnaJ"/>
    <property type="match status" value="1"/>
</dbReference>
<dbReference type="InterPro" id="IPR012724">
    <property type="entry name" value="DnaJ"/>
</dbReference>
<dbReference type="InterPro" id="IPR002939">
    <property type="entry name" value="DnaJ_C"/>
</dbReference>
<dbReference type="InterPro" id="IPR001623">
    <property type="entry name" value="DnaJ_domain"/>
</dbReference>
<dbReference type="InterPro" id="IPR018253">
    <property type="entry name" value="DnaJ_domain_CS"/>
</dbReference>
<dbReference type="InterPro" id="IPR008971">
    <property type="entry name" value="HSP40/DnaJ_pept-bd"/>
</dbReference>
<dbReference type="InterPro" id="IPR001305">
    <property type="entry name" value="HSP_DnaJ_Cys-rich_dom"/>
</dbReference>
<dbReference type="InterPro" id="IPR036410">
    <property type="entry name" value="HSP_DnaJ_Cys-rich_dom_sf"/>
</dbReference>
<dbReference type="InterPro" id="IPR036869">
    <property type="entry name" value="J_dom_sf"/>
</dbReference>
<dbReference type="NCBIfam" id="TIGR02349">
    <property type="entry name" value="DnaJ_bact"/>
    <property type="match status" value="1"/>
</dbReference>
<dbReference type="NCBIfam" id="NF008035">
    <property type="entry name" value="PRK10767.1"/>
    <property type="match status" value="1"/>
</dbReference>
<dbReference type="NCBIfam" id="NF010869">
    <property type="entry name" value="PRK14276.1"/>
    <property type="match status" value="1"/>
</dbReference>
<dbReference type="PANTHER" id="PTHR43096:SF48">
    <property type="entry name" value="CHAPERONE PROTEIN DNAJ"/>
    <property type="match status" value="1"/>
</dbReference>
<dbReference type="PANTHER" id="PTHR43096">
    <property type="entry name" value="DNAJ HOMOLOG 1, MITOCHONDRIAL-RELATED"/>
    <property type="match status" value="1"/>
</dbReference>
<dbReference type="Pfam" id="PF00226">
    <property type="entry name" value="DnaJ"/>
    <property type="match status" value="1"/>
</dbReference>
<dbReference type="Pfam" id="PF01556">
    <property type="entry name" value="DnaJ_C"/>
    <property type="match status" value="1"/>
</dbReference>
<dbReference type="Pfam" id="PF00684">
    <property type="entry name" value="DnaJ_CXXCXGXG"/>
    <property type="match status" value="1"/>
</dbReference>
<dbReference type="PRINTS" id="PR00625">
    <property type="entry name" value="JDOMAIN"/>
</dbReference>
<dbReference type="SMART" id="SM00271">
    <property type="entry name" value="DnaJ"/>
    <property type="match status" value="1"/>
</dbReference>
<dbReference type="SUPFAM" id="SSF46565">
    <property type="entry name" value="Chaperone J-domain"/>
    <property type="match status" value="1"/>
</dbReference>
<dbReference type="SUPFAM" id="SSF57938">
    <property type="entry name" value="DnaJ/Hsp40 cysteine-rich domain"/>
    <property type="match status" value="1"/>
</dbReference>
<dbReference type="SUPFAM" id="SSF49493">
    <property type="entry name" value="HSP40/DnaJ peptide-binding domain"/>
    <property type="match status" value="2"/>
</dbReference>
<dbReference type="PROSITE" id="PS00636">
    <property type="entry name" value="DNAJ_1"/>
    <property type="match status" value="1"/>
</dbReference>
<dbReference type="PROSITE" id="PS50076">
    <property type="entry name" value="DNAJ_2"/>
    <property type="match status" value="1"/>
</dbReference>
<dbReference type="PROSITE" id="PS51188">
    <property type="entry name" value="ZF_CR"/>
    <property type="match status" value="1"/>
</dbReference>
<proteinExistence type="inferred from homology"/>